<evidence type="ECO:0000250" key="1">
    <source>
        <dbReference type="UniProtKB" id="P32989"/>
    </source>
</evidence>
<evidence type="ECO:0000250" key="2">
    <source>
        <dbReference type="UniProtKB" id="P68698"/>
    </source>
</evidence>
<evidence type="ECO:0000255" key="3">
    <source>
        <dbReference type="PROSITE-ProRule" id="PRU01382"/>
    </source>
</evidence>
<evidence type="ECO:0000255" key="4">
    <source>
        <dbReference type="PROSITE-ProRule" id="PRU10130"/>
    </source>
</evidence>
<evidence type="ECO:0000305" key="5"/>
<sequence length="314" mass="36666">MRALFYKDGKLFTDNNFLNPVSDDNPAYEVLQHVKIPTHLTDVVVYEQTWEEALTRLIFVGSDSKGRRQYFYGKMHVQNRNAKRDRIFVRVYNVMKRINCFINKNIKKSSTDSNYQLAVFMLMETMFFIRFGKMKYLKENETVGLLTLKNKHIEISPDEIVIKFVGKDKVSHEFVVHKSNRLYKPLLKLTDDSSPEEFLFNKLSERKVYECIKQFGIRIKDLRTYGVNYTFLYNFWTNVKSISPLPSPKKLIALTIKQTAEVVGHTPSISKRAYMATTILEMVKDKNFLDVVSKTTFDEFLSIVVDHVKSSTDG</sequence>
<reference key="1">
    <citation type="journal article" date="1990" name="Virology">
        <title>The complete DNA sequence of vaccinia virus.</title>
        <authorList>
            <person name="Goebel S.J."/>
            <person name="Johnson G.P."/>
            <person name="Perkus M.E."/>
            <person name="Davis S.W."/>
            <person name="Winslow J.P."/>
            <person name="Paoletti E."/>
        </authorList>
    </citation>
    <scope>NUCLEOTIDE SEQUENCE [LARGE SCALE GENOMIC DNA]</scope>
</reference>
<reference key="2">
    <citation type="journal article" date="1990" name="Virology">
        <title>Appendix to 'The complete DNA sequence of vaccinia virus'.</title>
        <authorList>
            <person name="Goebel S.J."/>
            <person name="Johnson G.P."/>
            <person name="Perkus M.E."/>
            <person name="Davis S.W."/>
            <person name="Winslow J.P."/>
            <person name="Paoletti E."/>
        </authorList>
    </citation>
    <scope>NUCLEOTIDE SEQUENCE [LARGE SCALE GENOMIC DNA]</scope>
</reference>
<name>TOP1_VACCC</name>
<comment type="function">
    <text evidence="2">Releases the supercoiling and torsional tension of DNA introduced during the DNA replication and transcription by transiently cleaving and rejoining one strand of the DNA duplex. Introduces a single-strand break via transesterification at the specific target site 5'-[CT]CCTTp site in duplex DNA. The scissile phosphodiester is attacked by the catalytic tyrosine of the enzyme, resulting in the formation of a DNA-(3'-phosphotyrosyl)-enzyme intermediate and the expulsion of a 5'-OH DNA strand. The free DNA strand then undergoes passage around the unbroken strand thus removing DNA supercoils. Finally, in the religation step, the DNA 5'-OH attacks the covalent intermediate to expel the active-site tyrosine and restore the DNA phosphodiester backbone.</text>
</comment>
<comment type="catalytic activity">
    <reaction evidence="4">
        <text>ATP-independent breakage of single-stranded DNA, followed by passage and rejoining.</text>
        <dbReference type="EC" id="5.6.2.1"/>
    </reaction>
</comment>
<comment type="subcellular location">
    <subcellularLocation>
        <location evidence="2">Virion</location>
    </subcellularLocation>
</comment>
<comment type="induction">
    <text>Expressed in the late phase of the viral replicative cycle.</text>
</comment>
<comment type="similarity">
    <text evidence="5">Belongs to the type IB topoisomerase family.</text>
</comment>
<keyword id="KW-0238">DNA-binding</keyword>
<keyword id="KW-0413">Isomerase</keyword>
<keyword id="KW-0426">Late protein</keyword>
<keyword id="KW-1185">Reference proteome</keyword>
<keyword id="KW-0799">Topoisomerase</keyword>
<keyword id="KW-0946">Virion</keyword>
<feature type="chain" id="PRO_0000145215" description="DNA topoisomerase 1B">
    <location>
        <begin position="1"/>
        <end position="314"/>
    </location>
</feature>
<feature type="domain" description="Topo IB-type catalytic" evidence="3">
    <location>
        <begin position="77"/>
        <end position="314"/>
    </location>
</feature>
<feature type="active site" description="O-(3'-phospho-DNA)-tyrosine intermediate" evidence="3 4">
    <location>
        <position position="274"/>
    </location>
</feature>
<feature type="site" description="Involved in religation" evidence="1">
    <location>
        <position position="168"/>
    </location>
</feature>
<accession>P68697</accession>
<accession>P08585</accession>
<protein>
    <recommendedName>
        <fullName>DNA topoisomerase 1B</fullName>
        <shortName>TopIB</shortName>
        <ecNumber evidence="4">5.6.2.1</ecNumber>
    </recommendedName>
    <alternativeName>
        <fullName>DNA topoisomerase I</fullName>
    </alternativeName>
    <alternativeName>
        <fullName>Late protein H6</fullName>
    </alternativeName>
</protein>
<organism>
    <name type="scientific">Vaccinia virus (strain Copenhagen)</name>
    <name type="common">VACV</name>
    <dbReference type="NCBI Taxonomy" id="10249"/>
    <lineage>
        <taxon>Viruses</taxon>
        <taxon>Varidnaviria</taxon>
        <taxon>Bamfordvirae</taxon>
        <taxon>Nucleocytoviricota</taxon>
        <taxon>Pokkesviricetes</taxon>
        <taxon>Chitovirales</taxon>
        <taxon>Poxviridae</taxon>
        <taxon>Chordopoxvirinae</taxon>
        <taxon>Orthopoxvirus</taxon>
        <taxon>Vaccinia virus</taxon>
    </lineage>
</organism>
<proteinExistence type="evidence at transcript level"/>
<dbReference type="EC" id="5.6.2.1" evidence="4"/>
<dbReference type="EMBL" id="M35027">
    <property type="protein sequence ID" value="AAA48093.1"/>
    <property type="molecule type" value="Genomic_DNA"/>
</dbReference>
<dbReference type="PIR" id="G24481">
    <property type="entry name" value="QQVZH7"/>
</dbReference>
<dbReference type="SMR" id="P68697"/>
<dbReference type="Proteomes" id="UP000008269">
    <property type="component" value="Segment"/>
</dbReference>
<dbReference type="GO" id="GO:0044423">
    <property type="term" value="C:virion component"/>
    <property type="evidence" value="ECO:0007669"/>
    <property type="project" value="UniProtKB-KW"/>
</dbReference>
<dbReference type="GO" id="GO:0003677">
    <property type="term" value="F:DNA binding"/>
    <property type="evidence" value="ECO:0007669"/>
    <property type="project" value="UniProtKB-KW"/>
</dbReference>
<dbReference type="GO" id="GO:0003917">
    <property type="term" value="F:DNA topoisomerase type I (single strand cut, ATP-independent) activity"/>
    <property type="evidence" value="ECO:0007669"/>
    <property type="project" value="UniProtKB-EC"/>
</dbReference>
<dbReference type="GO" id="GO:0006265">
    <property type="term" value="P:DNA topological change"/>
    <property type="evidence" value="ECO:0007669"/>
    <property type="project" value="InterPro"/>
</dbReference>
<dbReference type="CDD" id="cd00659">
    <property type="entry name" value="Topo_IB_C"/>
    <property type="match status" value="1"/>
</dbReference>
<dbReference type="Gene3D" id="3.30.66.10">
    <property type="entry name" value="DNA topoisomerase I domain"/>
    <property type="match status" value="1"/>
</dbReference>
<dbReference type="Gene3D" id="3.90.15.10">
    <property type="entry name" value="Topoisomerase I, Chain A, domain 3"/>
    <property type="match status" value="1"/>
</dbReference>
<dbReference type="InterPro" id="IPR011010">
    <property type="entry name" value="DNA_brk_join_enz"/>
</dbReference>
<dbReference type="InterPro" id="IPR035447">
    <property type="entry name" value="DNA_topo_I_N_sf"/>
</dbReference>
<dbReference type="InterPro" id="IPR001631">
    <property type="entry name" value="TopoI"/>
</dbReference>
<dbReference type="InterPro" id="IPR014711">
    <property type="entry name" value="TopoI_cat_a-hlx-sub_euk"/>
</dbReference>
<dbReference type="InterPro" id="IPR013500">
    <property type="entry name" value="TopoI_cat_euk"/>
</dbReference>
<dbReference type="InterPro" id="IPR015346">
    <property type="entry name" value="TopoI_N_vir"/>
</dbReference>
<dbReference type="InterPro" id="IPR018521">
    <property type="entry name" value="TopoIB_AS"/>
</dbReference>
<dbReference type="Pfam" id="PF01028">
    <property type="entry name" value="Topoisom_I"/>
    <property type="match status" value="1"/>
</dbReference>
<dbReference type="Pfam" id="PF09266">
    <property type="entry name" value="VirDNA-topo-I_N"/>
    <property type="match status" value="1"/>
</dbReference>
<dbReference type="PRINTS" id="PR00416">
    <property type="entry name" value="EUTPISMRASEI"/>
</dbReference>
<dbReference type="SUPFAM" id="SSF56349">
    <property type="entry name" value="DNA breaking-rejoining enzymes"/>
    <property type="match status" value="1"/>
</dbReference>
<dbReference type="SUPFAM" id="SSF55869">
    <property type="entry name" value="DNA topoisomerase I domain"/>
    <property type="match status" value="1"/>
</dbReference>
<dbReference type="PROSITE" id="PS00176">
    <property type="entry name" value="TOPO_IB_1"/>
    <property type="match status" value="1"/>
</dbReference>
<dbReference type="PROSITE" id="PS52038">
    <property type="entry name" value="TOPO_IB_2"/>
    <property type="match status" value="1"/>
</dbReference>
<organismHost>
    <name type="scientific">Homo sapiens</name>
    <name type="common">Human</name>
    <dbReference type="NCBI Taxonomy" id="9606"/>
</organismHost>
<gene>
    <name type="primary">OPG111</name>
    <name type="synonym">TOP1</name>
    <name type="ORF">H6R</name>
</gene>